<feature type="chain" id="PRO_0000114736" description="Acetoin utilization protein AcuC">
    <location>
        <begin position="1"/>
        <end position="385"/>
    </location>
</feature>
<protein>
    <recommendedName>
        <fullName>Acetoin utilization protein AcuC</fullName>
    </recommendedName>
</protein>
<proteinExistence type="inferred from homology"/>
<dbReference type="EMBL" id="X95439">
    <property type="protein sequence ID" value="CAA64714.1"/>
    <property type="molecule type" value="Genomic_DNA"/>
</dbReference>
<dbReference type="RefSeq" id="WP_047172229.1">
    <property type="nucleotide sequence ID" value="NZ_CP066726.1"/>
</dbReference>
<dbReference type="SMR" id="Q56195"/>
<dbReference type="STRING" id="1288.AWC37_06505"/>
<dbReference type="KEGG" id="sxo:SXYL_01130"/>
<dbReference type="eggNOG" id="COG0123">
    <property type="taxonomic scope" value="Bacteria"/>
</dbReference>
<dbReference type="UniPathway" id="UPA00040"/>
<dbReference type="GO" id="GO:0004407">
    <property type="term" value="F:histone deacetylase activity"/>
    <property type="evidence" value="ECO:0007669"/>
    <property type="project" value="TreeGrafter"/>
</dbReference>
<dbReference type="GO" id="GO:0045150">
    <property type="term" value="P:acetoin catabolic process"/>
    <property type="evidence" value="ECO:0007669"/>
    <property type="project" value="UniProtKB-UniPathway"/>
</dbReference>
<dbReference type="GO" id="GO:0040029">
    <property type="term" value="P:epigenetic regulation of gene expression"/>
    <property type="evidence" value="ECO:0007669"/>
    <property type="project" value="TreeGrafter"/>
</dbReference>
<dbReference type="CDD" id="cd09994">
    <property type="entry name" value="HDAC_AcuC_like"/>
    <property type="match status" value="1"/>
</dbReference>
<dbReference type="Gene3D" id="3.40.800.20">
    <property type="entry name" value="Histone deacetylase domain"/>
    <property type="match status" value="1"/>
</dbReference>
<dbReference type="InterPro" id="IPR003085">
    <property type="entry name" value="AcuC"/>
</dbReference>
<dbReference type="InterPro" id="IPR050284">
    <property type="entry name" value="HDAC_PDAC"/>
</dbReference>
<dbReference type="InterPro" id="IPR000286">
    <property type="entry name" value="His_deacetylse"/>
</dbReference>
<dbReference type="InterPro" id="IPR023801">
    <property type="entry name" value="His_deacetylse_dom"/>
</dbReference>
<dbReference type="InterPro" id="IPR037138">
    <property type="entry name" value="His_deacetylse_dom_sf"/>
</dbReference>
<dbReference type="InterPro" id="IPR023696">
    <property type="entry name" value="Ureohydrolase_dom_sf"/>
</dbReference>
<dbReference type="PANTHER" id="PTHR10625:SF10">
    <property type="entry name" value="HISTONE DEACETYLASE HDAC1"/>
    <property type="match status" value="1"/>
</dbReference>
<dbReference type="PANTHER" id="PTHR10625">
    <property type="entry name" value="HISTONE DEACETYLASE HDAC1-RELATED"/>
    <property type="match status" value="1"/>
</dbReference>
<dbReference type="Pfam" id="PF00850">
    <property type="entry name" value="Hist_deacetyl"/>
    <property type="match status" value="1"/>
</dbReference>
<dbReference type="PRINTS" id="PR01272">
    <property type="entry name" value="ACUCPROTEIN"/>
</dbReference>
<dbReference type="PRINTS" id="PR01270">
    <property type="entry name" value="HDASUPER"/>
</dbReference>
<dbReference type="SUPFAM" id="SSF52768">
    <property type="entry name" value="Arginase/deacetylase"/>
    <property type="match status" value="1"/>
</dbReference>
<comment type="function">
    <text evidence="1">Role in growth on acetoin or butanediol. Involved in the breakdown of these compounds used as a carbon source (By similarity).</text>
</comment>
<comment type="pathway">
    <text>Ketone degradation; acetoin degradation.</text>
</comment>
<comment type="similarity">
    <text evidence="2">Belongs to the histone deacetylase family.</text>
</comment>
<reference key="1">
    <citation type="journal article" date="1996" name="Mol. Microbiol.">
        <title>Catabolite repression mediated by the catabolite control protein CcpA in Staphylococcus xylosus.</title>
        <authorList>
            <person name="Egeter O."/>
            <person name="Brueckner R."/>
        </authorList>
    </citation>
    <scope>NUCLEOTIDE SEQUENCE [GENOMIC DNA]</scope>
    <source>
        <strain>DSM 20267 / Isolate C2A</strain>
    </source>
</reference>
<keyword id="KW-0006">Acetoin catabolism</keyword>
<name>ACUC_STAXY</name>
<sequence>MSNMQQTTGYVYANELLQYRFSNKHPFNQMRLKLTTELLMELGQLKQHHIISPRIATDDELSLIHAYDYIQAIRHASHGILSENEAKKYGLDGEDTLQFRMMHKHSARIVGGALNLADQIMSGTLTNGCHLGGGLHHSLPGRANGFCIYNDVAITISYLMQKYNQRVLCIDTDAHHGDGTQWSFYTNDQALIYSIHETGKFLFPGSGHYTERGAEKGFGYTVNIPLEPYTEDQSFLDVFKQTIEPVVASFKPDIIVSVHGVDVHYLDPLTHMSCTLNTLYEIPYIVKSLADTYTQGKVIMFGGGGYNIWKVVPRAWSHVFLALIGEQPPTGSLPERWLTKWQPYATCTLPTNWSDDKENYIEIPRRKEISEINMKQAQKVLSWFE</sequence>
<gene>
    <name type="primary">acuC</name>
</gene>
<accession>Q56195</accession>
<evidence type="ECO:0000250" key="1"/>
<evidence type="ECO:0000305" key="2"/>
<organism>
    <name type="scientific">Staphylococcus xylosus</name>
    <dbReference type="NCBI Taxonomy" id="1288"/>
    <lineage>
        <taxon>Bacteria</taxon>
        <taxon>Bacillati</taxon>
        <taxon>Bacillota</taxon>
        <taxon>Bacilli</taxon>
        <taxon>Bacillales</taxon>
        <taxon>Staphylococcaceae</taxon>
        <taxon>Staphylococcus</taxon>
    </lineage>
</organism>